<gene>
    <name evidence="3" type="primary">SAT2</name>
    <name evidence="5" type="synonym">SSAT2</name>
</gene>
<sequence>MAFVMIREAKEGDCGNILRLIRELAEYEKLSDQVKISEEALRADGFGETPFYHCLVAEILSAPGEPQGPCVVGYGLYYFSYSTWKGRNIYLEDIYVKPEYRGQGIGSKIIKKVAEVALDKGCSQLRLAVLDWNKRAMDLYKALGAQDLTEAEGWHCFRFEGEAMRELAGK</sequence>
<comment type="function">
    <text evidence="3">Catalyzes the N-acetylation of the amino acid thialysine (S-(2-aminoethyl)-L-cysteine), a L-lysine analog with the 4-methylene group substituted with a sulfur. May also catalyze acetylation of polyamines, such as norspermidine, spermidine or spermine. However, ability to acetylate polyamines is weak, suggesting that it does not act as a diamine acetyltransferase in vivo.</text>
</comment>
<comment type="catalytic activity">
    <reaction evidence="3">
        <text>S-(2-aminoethyl)-L-cysteine + acetyl-CoA = S-(2-acetamidoethyl)-L-cysteine + CoA + H(+)</text>
        <dbReference type="Rhea" id="RHEA:64804"/>
        <dbReference type="ChEBI" id="CHEBI:15378"/>
        <dbReference type="ChEBI" id="CHEBI:57287"/>
        <dbReference type="ChEBI" id="CHEBI:57288"/>
        <dbReference type="ChEBI" id="CHEBI:156132"/>
        <dbReference type="ChEBI" id="CHEBI:156134"/>
    </reaction>
    <physiologicalReaction direction="left-to-right" evidence="3">
        <dbReference type="Rhea" id="RHEA:64805"/>
    </physiologicalReaction>
</comment>
<comment type="catalytic activity">
    <reaction evidence="3">
        <text>an alkane-alpha,omega-diamine + acetyl-CoA = an N-acetylalkane-alpha,omega-diamine + CoA + H(+)</text>
        <dbReference type="Rhea" id="RHEA:11116"/>
        <dbReference type="Rhea" id="RHEA-COMP:9766"/>
        <dbReference type="Rhea" id="RHEA-COMP:9767"/>
        <dbReference type="ChEBI" id="CHEBI:15378"/>
        <dbReference type="ChEBI" id="CHEBI:57287"/>
        <dbReference type="ChEBI" id="CHEBI:57288"/>
        <dbReference type="ChEBI" id="CHEBI:70977"/>
        <dbReference type="ChEBI" id="CHEBI:70988"/>
        <dbReference type="EC" id="2.3.1.57"/>
    </reaction>
</comment>
<comment type="subunit">
    <text evidence="3">Homodimer.</text>
</comment>
<comment type="subcellular location">
    <subcellularLocation>
        <location evidence="3">Cytoplasm</location>
    </subcellularLocation>
    <text evidence="3">Intracellular organelles.</text>
</comment>
<comment type="similarity">
    <text evidence="6">Belongs to the acetyltransferase family.</text>
</comment>
<feature type="chain" id="PRO_0000074597" description="Thialysine N-epsilon-acetyltransferase">
    <location>
        <begin position="1"/>
        <end position="170"/>
    </location>
</feature>
<feature type="domain" description="N-acetyltransferase" evidence="4">
    <location>
        <begin position="4"/>
        <end position="166"/>
    </location>
</feature>
<feature type="active site" description="Proton donor" evidence="1">
    <location>
        <position position="140"/>
    </location>
</feature>
<feature type="binding site" evidence="2">
    <location>
        <begin position="27"/>
        <end position="28"/>
    </location>
    <ligand>
        <name>substrate</name>
    </ligand>
</feature>
<feature type="binding site" evidence="2">
    <location>
        <position position="92"/>
    </location>
    <ligand>
        <name>substrate</name>
    </ligand>
</feature>
<feature type="binding site" evidence="3">
    <location>
        <begin position="94"/>
        <end position="96"/>
    </location>
    <ligand>
        <name>acetyl-CoA</name>
        <dbReference type="ChEBI" id="CHEBI:57288"/>
    </ligand>
</feature>
<feature type="binding site" evidence="3">
    <location>
        <begin position="102"/>
        <end position="107"/>
    </location>
    <ligand>
        <name>acetyl-CoA</name>
        <dbReference type="ChEBI" id="CHEBI:57288"/>
    </ligand>
</feature>
<feature type="binding site" evidence="3">
    <location>
        <begin position="133"/>
        <end position="135"/>
    </location>
    <ligand>
        <name>acetyl-CoA</name>
        <dbReference type="ChEBI" id="CHEBI:57288"/>
    </ligand>
</feature>
<feature type="binding site" evidence="3">
    <location>
        <position position="140"/>
    </location>
    <ligand>
        <name>acetyl-CoA</name>
        <dbReference type="ChEBI" id="CHEBI:57288"/>
    </ligand>
</feature>
<feature type="binding site" evidence="2">
    <location>
        <position position="152"/>
    </location>
    <ligand>
        <name>substrate</name>
    </ligand>
</feature>
<feature type="modified residue" description="N6-acetyllysine" evidence="3">
    <location>
        <position position="29"/>
    </location>
</feature>
<name>SAT2_BOVIN</name>
<keyword id="KW-0007">Acetylation</keyword>
<keyword id="KW-0012">Acyltransferase</keyword>
<keyword id="KW-0963">Cytoplasm</keyword>
<keyword id="KW-1185">Reference proteome</keyword>
<keyword id="KW-0808">Transferase</keyword>
<protein>
    <recommendedName>
        <fullName evidence="6">Thialysine N-epsilon-acetyltransferase</fullName>
        <ecNumber evidence="3">2.3.1.-</ecNumber>
    </recommendedName>
    <alternativeName>
        <fullName evidence="3">Diamine acetyltransferase 2</fullName>
        <ecNumber evidence="3">2.3.1.57</ecNumber>
    </alternativeName>
    <alternativeName>
        <fullName evidence="5">Spermidine/spermine N(1)-acetyltransferase 2</fullName>
        <shortName evidence="5">SSAT-2</shortName>
    </alternativeName>
</protein>
<evidence type="ECO:0000250" key="1">
    <source>
        <dbReference type="UniProtKB" id="P0A951"/>
    </source>
</evidence>
<evidence type="ECO:0000250" key="2">
    <source>
        <dbReference type="UniProtKB" id="P21673"/>
    </source>
</evidence>
<evidence type="ECO:0000250" key="3">
    <source>
        <dbReference type="UniProtKB" id="Q96F10"/>
    </source>
</evidence>
<evidence type="ECO:0000255" key="4">
    <source>
        <dbReference type="PROSITE-ProRule" id="PRU00532"/>
    </source>
</evidence>
<evidence type="ECO:0000303" key="5">
    <source>
    </source>
</evidence>
<evidence type="ECO:0000305" key="6"/>
<proteinExistence type="evidence at transcript level"/>
<accession>Q7PCJ8</accession>
<accession>Q0II54</accession>
<reference key="1">
    <citation type="submission" date="2006-08" db="EMBL/GenBank/DDBJ databases">
        <authorList>
            <consortium name="NIH - Mammalian Gene Collection (MGC) project"/>
        </authorList>
    </citation>
    <scope>NUCLEOTIDE SEQUENCE [LARGE SCALE MRNA]</scope>
    <source>
        <strain>Hereford</strain>
        <tissue>Hypothalamus</tissue>
    </source>
</reference>
<reference key="2">
    <citation type="journal article" date="2003" name="Biochem. J.">
        <title>Genomic identification and biochemical characterization of a second spermidine/spermine N1-acetyltransferase.</title>
        <authorList>
            <person name="Chen Y."/>
            <person name="Vujcic S."/>
            <person name="Liang P."/>
            <person name="Diegelman P."/>
            <person name="Kramer D.L."/>
            <person name="Porter C.W."/>
        </authorList>
    </citation>
    <scope>IDENTIFICATION</scope>
</reference>
<dbReference type="EC" id="2.3.1.-" evidence="3"/>
<dbReference type="EC" id="2.3.1.57" evidence="3"/>
<dbReference type="EMBL" id="BC122800">
    <property type="protein sequence ID" value="AAI22801.1"/>
    <property type="molecule type" value="mRNA"/>
</dbReference>
<dbReference type="EMBL" id="BK001359">
    <property type="protein sequence ID" value="DAA01469.1"/>
    <property type="molecule type" value="mRNA"/>
</dbReference>
<dbReference type="RefSeq" id="NP_976068.1">
    <property type="nucleotide sequence ID" value="NM_203323.3"/>
</dbReference>
<dbReference type="SMR" id="Q7PCJ8"/>
<dbReference type="FunCoup" id="Q7PCJ8">
    <property type="interactions" value="343"/>
</dbReference>
<dbReference type="STRING" id="9913.ENSBTAP00000005531"/>
<dbReference type="PaxDb" id="9913-ENSBTAP00000005531"/>
<dbReference type="GeneID" id="359722"/>
<dbReference type="KEGG" id="bta:359722"/>
<dbReference type="CTD" id="112483"/>
<dbReference type="VEuPathDB" id="HostDB:ENSBTAG00000004222"/>
<dbReference type="eggNOG" id="KOG3216">
    <property type="taxonomic scope" value="Eukaryota"/>
</dbReference>
<dbReference type="HOGENOM" id="CLU_013985_41_1_1"/>
<dbReference type="InParanoid" id="Q7PCJ8"/>
<dbReference type="OMA" id="QSEWVRY"/>
<dbReference type="OrthoDB" id="7305308at2759"/>
<dbReference type="TreeFam" id="TF319736"/>
<dbReference type="Proteomes" id="UP000009136">
    <property type="component" value="Chromosome 19"/>
</dbReference>
<dbReference type="Bgee" id="ENSBTAG00000004222">
    <property type="expression patterns" value="Expressed in metanephros cortex and 103 other cell types or tissues"/>
</dbReference>
<dbReference type="GO" id="GO:0005737">
    <property type="term" value="C:cytoplasm"/>
    <property type="evidence" value="ECO:0007669"/>
    <property type="project" value="UniProtKB-SubCell"/>
</dbReference>
<dbReference type="GO" id="GO:0008080">
    <property type="term" value="F:N-acetyltransferase activity"/>
    <property type="evidence" value="ECO:0000250"/>
    <property type="project" value="UniProtKB"/>
</dbReference>
<dbReference type="CDD" id="cd04301">
    <property type="entry name" value="NAT_SF"/>
    <property type="match status" value="1"/>
</dbReference>
<dbReference type="FunFam" id="3.40.630.30:FF:000011">
    <property type="entry name" value="Diamine acetyltransferase 1"/>
    <property type="match status" value="1"/>
</dbReference>
<dbReference type="Gene3D" id="3.40.630.30">
    <property type="match status" value="1"/>
</dbReference>
<dbReference type="InterPro" id="IPR016181">
    <property type="entry name" value="Acyl_CoA_acyltransferase"/>
</dbReference>
<dbReference type="InterPro" id="IPR051016">
    <property type="entry name" value="Diverse_Substrate_AcTransf"/>
</dbReference>
<dbReference type="InterPro" id="IPR000182">
    <property type="entry name" value="GNAT_dom"/>
</dbReference>
<dbReference type="PANTHER" id="PTHR10545">
    <property type="entry name" value="DIAMINE N-ACETYLTRANSFERASE"/>
    <property type="match status" value="1"/>
</dbReference>
<dbReference type="PANTHER" id="PTHR10545:SF51">
    <property type="entry name" value="THIALYSINE N-EPSILON-ACETYLTRANSFERASE"/>
    <property type="match status" value="1"/>
</dbReference>
<dbReference type="Pfam" id="PF00583">
    <property type="entry name" value="Acetyltransf_1"/>
    <property type="match status" value="1"/>
</dbReference>
<dbReference type="SUPFAM" id="SSF55729">
    <property type="entry name" value="Acyl-CoA N-acyltransferases (Nat)"/>
    <property type="match status" value="1"/>
</dbReference>
<dbReference type="PROSITE" id="PS51186">
    <property type="entry name" value="GNAT"/>
    <property type="match status" value="1"/>
</dbReference>
<organism>
    <name type="scientific">Bos taurus</name>
    <name type="common">Bovine</name>
    <dbReference type="NCBI Taxonomy" id="9913"/>
    <lineage>
        <taxon>Eukaryota</taxon>
        <taxon>Metazoa</taxon>
        <taxon>Chordata</taxon>
        <taxon>Craniata</taxon>
        <taxon>Vertebrata</taxon>
        <taxon>Euteleostomi</taxon>
        <taxon>Mammalia</taxon>
        <taxon>Eutheria</taxon>
        <taxon>Laurasiatheria</taxon>
        <taxon>Artiodactyla</taxon>
        <taxon>Ruminantia</taxon>
        <taxon>Pecora</taxon>
        <taxon>Bovidae</taxon>
        <taxon>Bovinae</taxon>
        <taxon>Bos</taxon>
    </lineage>
</organism>